<evidence type="ECO:0000255" key="1">
    <source>
        <dbReference type="HAMAP-Rule" id="MF_00011"/>
    </source>
</evidence>
<accession>A6TXB3</accession>
<proteinExistence type="inferred from homology"/>
<comment type="function">
    <text evidence="1">Plays an important role in the de novo pathway of purine nucleotide biosynthesis. Catalyzes the first committed step in the biosynthesis of AMP from IMP.</text>
</comment>
<comment type="catalytic activity">
    <reaction evidence="1">
        <text>IMP + L-aspartate + GTP = N(6)-(1,2-dicarboxyethyl)-AMP + GDP + phosphate + 2 H(+)</text>
        <dbReference type="Rhea" id="RHEA:15753"/>
        <dbReference type="ChEBI" id="CHEBI:15378"/>
        <dbReference type="ChEBI" id="CHEBI:29991"/>
        <dbReference type="ChEBI" id="CHEBI:37565"/>
        <dbReference type="ChEBI" id="CHEBI:43474"/>
        <dbReference type="ChEBI" id="CHEBI:57567"/>
        <dbReference type="ChEBI" id="CHEBI:58053"/>
        <dbReference type="ChEBI" id="CHEBI:58189"/>
        <dbReference type="EC" id="6.3.4.4"/>
    </reaction>
</comment>
<comment type="cofactor">
    <cofactor evidence="1">
        <name>Mg(2+)</name>
        <dbReference type="ChEBI" id="CHEBI:18420"/>
    </cofactor>
    <text evidence="1">Binds 1 Mg(2+) ion per subunit.</text>
</comment>
<comment type="pathway">
    <text evidence="1">Purine metabolism; AMP biosynthesis via de novo pathway; AMP from IMP: step 1/2.</text>
</comment>
<comment type="subunit">
    <text evidence="1">Homodimer.</text>
</comment>
<comment type="subcellular location">
    <subcellularLocation>
        <location evidence="1">Cytoplasm</location>
    </subcellularLocation>
</comment>
<comment type="similarity">
    <text evidence="1">Belongs to the adenylosuccinate synthetase family.</text>
</comment>
<name>PURA_ALKMQ</name>
<dbReference type="EC" id="6.3.4.4" evidence="1"/>
<dbReference type="EMBL" id="CP000724">
    <property type="protein sequence ID" value="ABR50831.1"/>
    <property type="molecule type" value="Genomic_DNA"/>
</dbReference>
<dbReference type="RefSeq" id="WP_012065716.1">
    <property type="nucleotide sequence ID" value="NC_009633.1"/>
</dbReference>
<dbReference type="SMR" id="A6TXB3"/>
<dbReference type="STRING" id="293826.Amet_4765"/>
<dbReference type="KEGG" id="amt:Amet_4765"/>
<dbReference type="eggNOG" id="COG0104">
    <property type="taxonomic scope" value="Bacteria"/>
</dbReference>
<dbReference type="HOGENOM" id="CLU_029848_0_0_9"/>
<dbReference type="OrthoDB" id="9807553at2"/>
<dbReference type="UniPathway" id="UPA00075">
    <property type="reaction ID" value="UER00335"/>
</dbReference>
<dbReference type="Proteomes" id="UP000001572">
    <property type="component" value="Chromosome"/>
</dbReference>
<dbReference type="GO" id="GO:0005737">
    <property type="term" value="C:cytoplasm"/>
    <property type="evidence" value="ECO:0007669"/>
    <property type="project" value="UniProtKB-SubCell"/>
</dbReference>
<dbReference type="GO" id="GO:0004019">
    <property type="term" value="F:adenylosuccinate synthase activity"/>
    <property type="evidence" value="ECO:0007669"/>
    <property type="project" value="UniProtKB-UniRule"/>
</dbReference>
<dbReference type="GO" id="GO:0005525">
    <property type="term" value="F:GTP binding"/>
    <property type="evidence" value="ECO:0007669"/>
    <property type="project" value="UniProtKB-UniRule"/>
</dbReference>
<dbReference type="GO" id="GO:0000287">
    <property type="term" value="F:magnesium ion binding"/>
    <property type="evidence" value="ECO:0007669"/>
    <property type="project" value="UniProtKB-UniRule"/>
</dbReference>
<dbReference type="GO" id="GO:0044208">
    <property type="term" value="P:'de novo' AMP biosynthetic process"/>
    <property type="evidence" value="ECO:0007669"/>
    <property type="project" value="UniProtKB-UniRule"/>
</dbReference>
<dbReference type="GO" id="GO:0046040">
    <property type="term" value="P:IMP metabolic process"/>
    <property type="evidence" value="ECO:0007669"/>
    <property type="project" value="TreeGrafter"/>
</dbReference>
<dbReference type="CDD" id="cd03108">
    <property type="entry name" value="AdSS"/>
    <property type="match status" value="1"/>
</dbReference>
<dbReference type="FunFam" id="1.10.300.10:FF:000001">
    <property type="entry name" value="Adenylosuccinate synthetase"/>
    <property type="match status" value="1"/>
</dbReference>
<dbReference type="FunFam" id="3.90.170.10:FF:000001">
    <property type="entry name" value="Adenylosuccinate synthetase"/>
    <property type="match status" value="1"/>
</dbReference>
<dbReference type="Gene3D" id="3.40.440.10">
    <property type="entry name" value="Adenylosuccinate Synthetase, subunit A, domain 1"/>
    <property type="match status" value="1"/>
</dbReference>
<dbReference type="Gene3D" id="1.10.300.10">
    <property type="entry name" value="Adenylosuccinate Synthetase, subunit A, domain 2"/>
    <property type="match status" value="1"/>
</dbReference>
<dbReference type="Gene3D" id="3.90.170.10">
    <property type="entry name" value="Adenylosuccinate Synthetase, subunit A, domain 3"/>
    <property type="match status" value="1"/>
</dbReference>
<dbReference type="HAMAP" id="MF_00011">
    <property type="entry name" value="Adenylosucc_synth"/>
    <property type="match status" value="1"/>
</dbReference>
<dbReference type="InterPro" id="IPR018220">
    <property type="entry name" value="Adenylosuccin_syn_GTP-bd"/>
</dbReference>
<dbReference type="InterPro" id="IPR033128">
    <property type="entry name" value="Adenylosuccin_syn_Lys_AS"/>
</dbReference>
<dbReference type="InterPro" id="IPR042109">
    <property type="entry name" value="Adenylosuccinate_synth_dom1"/>
</dbReference>
<dbReference type="InterPro" id="IPR042110">
    <property type="entry name" value="Adenylosuccinate_synth_dom2"/>
</dbReference>
<dbReference type="InterPro" id="IPR042111">
    <property type="entry name" value="Adenylosuccinate_synth_dom3"/>
</dbReference>
<dbReference type="InterPro" id="IPR001114">
    <property type="entry name" value="Adenylosuccinate_synthetase"/>
</dbReference>
<dbReference type="InterPro" id="IPR027417">
    <property type="entry name" value="P-loop_NTPase"/>
</dbReference>
<dbReference type="NCBIfam" id="NF002223">
    <property type="entry name" value="PRK01117.1"/>
    <property type="match status" value="1"/>
</dbReference>
<dbReference type="NCBIfam" id="TIGR00184">
    <property type="entry name" value="purA"/>
    <property type="match status" value="1"/>
</dbReference>
<dbReference type="PANTHER" id="PTHR11846">
    <property type="entry name" value="ADENYLOSUCCINATE SYNTHETASE"/>
    <property type="match status" value="1"/>
</dbReference>
<dbReference type="PANTHER" id="PTHR11846:SF0">
    <property type="entry name" value="ADENYLOSUCCINATE SYNTHETASE"/>
    <property type="match status" value="1"/>
</dbReference>
<dbReference type="Pfam" id="PF00709">
    <property type="entry name" value="Adenylsucc_synt"/>
    <property type="match status" value="1"/>
</dbReference>
<dbReference type="SMART" id="SM00788">
    <property type="entry name" value="Adenylsucc_synt"/>
    <property type="match status" value="1"/>
</dbReference>
<dbReference type="SUPFAM" id="SSF52540">
    <property type="entry name" value="P-loop containing nucleoside triphosphate hydrolases"/>
    <property type="match status" value="1"/>
</dbReference>
<dbReference type="PROSITE" id="PS01266">
    <property type="entry name" value="ADENYLOSUCCIN_SYN_1"/>
    <property type="match status" value="1"/>
</dbReference>
<dbReference type="PROSITE" id="PS00513">
    <property type="entry name" value="ADENYLOSUCCIN_SYN_2"/>
    <property type="match status" value="1"/>
</dbReference>
<sequence>MPSIVIVGAQWGDEGKGKIIDYLAQEADVVIRAQGGNNAGHTVMVEDKKYSFHLLPSGVLFEDKLNIIGNGVVFDPEGFLQEIEVLKKEGINTSNIKIDERVHVIFPYHKRIDQLEEEARGEAQIGTTKKGIGPCYMDKIQRSGIRLGEMIDEEDFKDRLYKQVDDKNKIIEKIYEAEGFEKEAMYETYLKYAREIKKYVTDTTILAHEALKAKKKVLFEGAQGTLLDIDLGTYPYVTSSHPTAGGFPIGAGIGPNQIEQVLGIVKAYTTRVGSGTFPTELDNEVGDKIRIKGNEFGTTTGRPRRCGWFDGVMVRYTTRINGLTAMSLMLLDVLSGFDTLKICTGYELEGEMVAHFPANIKTLGKCKPIYEELPGWEEDITNMKTYEELPENAKKYIERIESYVGVPIKMISVGPKRNQTIIRERLF</sequence>
<keyword id="KW-0963">Cytoplasm</keyword>
<keyword id="KW-0342">GTP-binding</keyword>
<keyword id="KW-0436">Ligase</keyword>
<keyword id="KW-0460">Magnesium</keyword>
<keyword id="KW-0479">Metal-binding</keyword>
<keyword id="KW-0547">Nucleotide-binding</keyword>
<keyword id="KW-0658">Purine biosynthesis</keyword>
<keyword id="KW-1185">Reference proteome</keyword>
<protein>
    <recommendedName>
        <fullName evidence="1">Adenylosuccinate synthetase</fullName>
        <shortName evidence="1">AMPSase</shortName>
        <shortName evidence="1">AdSS</shortName>
        <ecNumber evidence="1">6.3.4.4</ecNumber>
    </recommendedName>
    <alternativeName>
        <fullName evidence="1">IMP--aspartate ligase</fullName>
    </alternativeName>
</protein>
<feature type="chain" id="PRO_1000057085" description="Adenylosuccinate synthetase">
    <location>
        <begin position="1"/>
        <end position="427"/>
    </location>
</feature>
<feature type="active site" description="Proton acceptor" evidence="1">
    <location>
        <position position="13"/>
    </location>
</feature>
<feature type="active site" description="Proton donor" evidence="1">
    <location>
        <position position="41"/>
    </location>
</feature>
<feature type="binding site" evidence="1">
    <location>
        <begin position="12"/>
        <end position="18"/>
    </location>
    <ligand>
        <name>GTP</name>
        <dbReference type="ChEBI" id="CHEBI:37565"/>
    </ligand>
</feature>
<feature type="binding site" description="in other chain" evidence="1">
    <location>
        <begin position="13"/>
        <end position="16"/>
    </location>
    <ligand>
        <name>IMP</name>
        <dbReference type="ChEBI" id="CHEBI:58053"/>
        <note>ligand shared between dimeric partners</note>
    </ligand>
</feature>
<feature type="binding site" evidence="1">
    <location>
        <position position="13"/>
    </location>
    <ligand>
        <name>Mg(2+)</name>
        <dbReference type="ChEBI" id="CHEBI:18420"/>
    </ligand>
</feature>
<feature type="binding site" description="in other chain" evidence="1">
    <location>
        <begin position="38"/>
        <end position="41"/>
    </location>
    <ligand>
        <name>IMP</name>
        <dbReference type="ChEBI" id="CHEBI:58053"/>
        <note>ligand shared between dimeric partners</note>
    </ligand>
</feature>
<feature type="binding site" evidence="1">
    <location>
        <begin position="40"/>
        <end position="42"/>
    </location>
    <ligand>
        <name>GTP</name>
        <dbReference type="ChEBI" id="CHEBI:37565"/>
    </ligand>
</feature>
<feature type="binding site" evidence="1">
    <location>
        <position position="40"/>
    </location>
    <ligand>
        <name>Mg(2+)</name>
        <dbReference type="ChEBI" id="CHEBI:18420"/>
    </ligand>
</feature>
<feature type="binding site" description="in other chain" evidence="1">
    <location>
        <position position="128"/>
    </location>
    <ligand>
        <name>IMP</name>
        <dbReference type="ChEBI" id="CHEBI:58053"/>
        <note>ligand shared between dimeric partners</note>
    </ligand>
</feature>
<feature type="binding site" evidence="1">
    <location>
        <position position="142"/>
    </location>
    <ligand>
        <name>IMP</name>
        <dbReference type="ChEBI" id="CHEBI:58053"/>
        <note>ligand shared between dimeric partners</note>
    </ligand>
</feature>
<feature type="binding site" description="in other chain" evidence="1">
    <location>
        <position position="223"/>
    </location>
    <ligand>
        <name>IMP</name>
        <dbReference type="ChEBI" id="CHEBI:58053"/>
        <note>ligand shared between dimeric partners</note>
    </ligand>
</feature>
<feature type="binding site" description="in other chain" evidence="1">
    <location>
        <position position="238"/>
    </location>
    <ligand>
        <name>IMP</name>
        <dbReference type="ChEBI" id="CHEBI:58053"/>
        <note>ligand shared between dimeric partners</note>
    </ligand>
</feature>
<feature type="binding site" evidence="1">
    <location>
        <begin position="298"/>
        <end position="304"/>
    </location>
    <ligand>
        <name>substrate</name>
    </ligand>
</feature>
<feature type="binding site" description="in other chain" evidence="1">
    <location>
        <position position="302"/>
    </location>
    <ligand>
        <name>IMP</name>
        <dbReference type="ChEBI" id="CHEBI:58053"/>
        <note>ligand shared between dimeric partners</note>
    </ligand>
</feature>
<feature type="binding site" evidence="1">
    <location>
        <position position="304"/>
    </location>
    <ligand>
        <name>GTP</name>
        <dbReference type="ChEBI" id="CHEBI:37565"/>
    </ligand>
</feature>
<feature type="binding site" evidence="1">
    <location>
        <begin position="330"/>
        <end position="332"/>
    </location>
    <ligand>
        <name>GTP</name>
        <dbReference type="ChEBI" id="CHEBI:37565"/>
    </ligand>
</feature>
<feature type="binding site" evidence="1">
    <location>
        <begin position="412"/>
        <end position="414"/>
    </location>
    <ligand>
        <name>GTP</name>
        <dbReference type="ChEBI" id="CHEBI:37565"/>
    </ligand>
</feature>
<reference key="1">
    <citation type="journal article" date="2016" name="Genome Announc.">
        <title>Complete genome sequence of Alkaliphilus metalliredigens strain QYMF, an alkaliphilic and metal-reducing bacterium isolated from borax-contaminated leachate ponds.</title>
        <authorList>
            <person name="Hwang C."/>
            <person name="Copeland A."/>
            <person name="Lucas S."/>
            <person name="Lapidus A."/>
            <person name="Barry K."/>
            <person name="Detter J.C."/>
            <person name="Glavina Del Rio T."/>
            <person name="Hammon N."/>
            <person name="Israni S."/>
            <person name="Dalin E."/>
            <person name="Tice H."/>
            <person name="Pitluck S."/>
            <person name="Chertkov O."/>
            <person name="Brettin T."/>
            <person name="Bruce D."/>
            <person name="Han C."/>
            <person name="Schmutz J."/>
            <person name="Larimer F."/>
            <person name="Land M.L."/>
            <person name="Hauser L."/>
            <person name="Kyrpides N."/>
            <person name="Mikhailova N."/>
            <person name="Ye Q."/>
            <person name="Zhou J."/>
            <person name="Richardson P."/>
            <person name="Fields M.W."/>
        </authorList>
    </citation>
    <scope>NUCLEOTIDE SEQUENCE [LARGE SCALE GENOMIC DNA]</scope>
    <source>
        <strain>QYMF</strain>
    </source>
</reference>
<gene>
    <name evidence="1" type="primary">purA</name>
    <name type="ordered locus">Amet_4765</name>
</gene>
<organism>
    <name type="scientific">Alkaliphilus metalliredigens (strain QYMF)</name>
    <dbReference type="NCBI Taxonomy" id="293826"/>
    <lineage>
        <taxon>Bacteria</taxon>
        <taxon>Bacillati</taxon>
        <taxon>Bacillota</taxon>
        <taxon>Clostridia</taxon>
        <taxon>Peptostreptococcales</taxon>
        <taxon>Natronincolaceae</taxon>
        <taxon>Alkaliphilus</taxon>
    </lineage>
</organism>